<keyword id="KW-0045">Antibiotic biosynthesis</keyword>
<keyword id="KW-0378">Hydrolase</keyword>
<protein>
    <recommendedName>
        <fullName>Probable cadicidin biosynthesis thioesterase</fullName>
        <ecNumber>3.1.2.-</ecNumber>
    </recommendedName>
    <alternativeName>
        <fullName>ORF-1</fullName>
    </alternativeName>
    <alternativeName>
        <fullName>Protein X</fullName>
    </alternativeName>
</protein>
<sequence>MRVTVDSEQCVGAGQCVLNAPEVFDQDDDGVVVLLRADPTSGTTRRSARRATCARRPRSSSRRTEPAGCADRHRCPVRPGPRTRGPADPPPANTDRRQNHRRDSPVTTADDTAARWLRRYHPAEADAVRLVCFPHAGGSASFYHPVSARFAPGAEVVSLQYPGRQDRRKEPCVPDLGTLADLITEQLLPLDERPTVFFGHSMGAALAFETAWRLEQKGAGPRTVIASGRRGPSTTRAERVHTRDDDGIVAEMKRLNGTAAGVLGDEEILRMALPALRGDYRAIETYTCPPDRRLACGLTVLTGEDDPLTTVEEAERWRDHTTGPFRLRVFTGGHFFLTQHLDAVNTEIAQALHPDRAAPAA</sequence>
<accession>P33586</accession>
<evidence type="ECO:0000250" key="1"/>
<evidence type="ECO:0000255" key="2">
    <source>
        <dbReference type="PROSITE-ProRule" id="PRU00711"/>
    </source>
</evidence>
<evidence type="ECO:0000256" key="3">
    <source>
        <dbReference type="SAM" id="MobiDB-lite"/>
    </source>
</evidence>
<evidence type="ECO:0000305" key="4"/>
<proteinExistence type="inferred from homology"/>
<feature type="chain" id="PRO_0000180365" description="Probable cadicidin biosynthesis thioesterase">
    <location>
        <begin position="1"/>
        <end position="361"/>
    </location>
</feature>
<feature type="domain" description="4Fe-4S ferredoxin-type" evidence="2">
    <location>
        <begin position="2"/>
        <end position="29"/>
    </location>
</feature>
<feature type="region of interest" description="Disordered" evidence="3">
    <location>
        <begin position="36"/>
        <end position="110"/>
    </location>
</feature>
<feature type="compositionally biased region" description="Basic residues" evidence="3">
    <location>
        <begin position="46"/>
        <end position="61"/>
    </location>
</feature>
<feature type="compositionally biased region" description="Basic and acidic residues" evidence="3">
    <location>
        <begin position="62"/>
        <end position="74"/>
    </location>
</feature>
<feature type="compositionally biased region" description="Basic and acidic residues" evidence="3">
    <location>
        <begin position="94"/>
        <end position="104"/>
    </location>
</feature>
<feature type="active site" evidence="1">
    <location>
        <position position="201"/>
    </location>
</feature>
<organism>
    <name type="scientific">Streptomyces griseus</name>
    <dbReference type="NCBI Taxonomy" id="1911"/>
    <lineage>
        <taxon>Bacteria</taxon>
        <taxon>Bacillati</taxon>
        <taxon>Actinomycetota</taxon>
        <taxon>Actinomycetes</taxon>
        <taxon>Kitasatosporales</taxon>
        <taxon>Streptomycetaceae</taxon>
        <taxon>Streptomyces</taxon>
    </lineage>
</organism>
<name>PABT_STRGR</name>
<dbReference type="EC" id="3.1.2.-"/>
<dbReference type="EMBL" id="M93058">
    <property type="protein sequence ID" value="AAA72110.1"/>
    <property type="molecule type" value="Unassigned_DNA"/>
</dbReference>
<dbReference type="PIR" id="JN0530">
    <property type="entry name" value="JN0530"/>
</dbReference>
<dbReference type="SMR" id="P33586"/>
<dbReference type="ESTHER" id="strgr-pabt">
    <property type="family name" value="Thioesterase"/>
</dbReference>
<dbReference type="UniPathway" id="UPA00101"/>
<dbReference type="GO" id="GO:0016787">
    <property type="term" value="F:hydrolase activity"/>
    <property type="evidence" value="ECO:0007669"/>
    <property type="project" value="UniProtKB-KW"/>
</dbReference>
<dbReference type="GO" id="GO:0017000">
    <property type="term" value="P:antibiotic biosynthetic process"/>
    <property type="evidence" value="ECO:0007669"/>
    <property type="project" value="UniProtKB-KW"/>
</dbReference>
<dbReference type="GO" id="GO:0008610">
    <property type="term" value="P:lipid biosynthetic process"/>
    <property type="evidence" value="ECO:0007669"/>
    <property type="project" value="TreeGrafter"/>
</dbReference>
<dbReference type="Gene3D" id="3.30.70.20">
    <property type="match status" value="1"/>
</dbReference>
<dbReference type="Gene3D" id="3.40.50.1820">
    <property type="entry name" value="alpha/beta hydrolase"/>
    <property type="match status" value="1"/>
</dbReference>
<dbReference type="InterPro" id="IPR017896">
    <property type="entry name" value="4Fe4S_Fe-S-bd"/>
</dbReference>
<dbReference type="InterPro" id="IPR029058">
    <property type="entry name" value="AB_hydrolase_fold"/>
</dbReference>
<dbReference type="InterPro" id="IPR020802">
    <property type="entry name" value="PKS_thioesterase"/>
</dbReference>
<dbReference type="InterPro" id="IPR012223">
    <property type="entry name" value="TEII"/>
</dbReference>
<dbReference type="InterPro" id="IPR001031">
    <property type="entry name" value="Thioesterase"/>
</dbReference>
<dbReference type="PANTHER" id="PTHR11487:SF0">
    <property type="entry name" value="S-ACYL FATTY ACID SYNTHASE THIOESTERASE, MEDIUM CHAIN"/>
    <property type="match status" value="1"/>
</dbReference>
<dbReference type="PANTHER" id="PTHR11487">
    <property type="entry name" value="THIOESTERASE"/>
    <property type="match status" value="1"/>
</dbReference>
<dbReference type="Pfam" id="PF13459">
    <property type="entry name" value="Fer4_15"/>
    <property type="match status" value="1"/>
</dbReference>
<dbReference type="Pfam" id="PF00975">
    <property type="entry name" value="Thioesterase"/>
    <property type="match status" value="1"/>
</dbReference>
<dbReference type="SMART" id="SM00824">
    <property type="entry name" value="PKS_TE"/>
    <property type="match status" value="1"/>
</dbReference>
<dbReference type="SUPFAM" id="SSF54862">
    <property type="entry name" value="4Fe-4S ferredoxins"/>
    <property type="match status" value="1"/>
</dbReference>
<dbReference type="SUPFAM" id="SSF53474">
    <property type="entry name" value="alpha/beta-Hydrolases"/>
    <property type="match status" value="1"/>
</dbReference>
<dbReference type="PROSITE" id="PS51379">
    <property type="entry name" value="4FE4S_FER_2"/>
    <property type="match status" value="1"/>
</dbReference>
<comment type="function">
    <text>Probable thioesterase involved in the biosynthesis of candicidin. Could release the macrolide ring from the polyketide synthase.</text>
</comment>
<comment type="pathway">
    <text>Antibiotic biosynthesis; candicidin biosynthesis.</text>
</comment>
<comment type="similarity">
    <text evidence="4">Belongs to the thioesterase family.</text>
</comment>
<reference key="1">
    <citation type="journal article" date="1993" name="Gene">
        <title>The pab gene of Streptomyces griseus, encoding p-aminobenzoic acid synthase, is located between genes possibly involved in candicidin biosynthesis.</title>
        <authorList>
            <person name="Criado L.M."/>
            <person name="Martin J.F."/>
            <person name="Gil J.A."/>
        </authorList>
    </citation>
    <scope>NUCLEOTIDE SEQUENCE [GENOMIC DNA]</scope>
    <source>
        <strain>IMRU 3570</strain>
    </source>
</reference>